<evidence type="ECO:0000255" key="1">
    <source>
        <dbReference type="HAMAP-Rule" id="MF_00332"/>
    </source>
</evidence>
<evidence type="ECO:0000256" key="2">
    <source>
        <dbReference type="SAM" id="MobiDB-lite"/>
    </source>
</evidence>
<comment type="function">
    <text evidence="1">Acts as a chaperone.</text>
</comment>
<comment type="induction">
    <text evidence="1">By stress conditions e.g. heat shock.</text>
</comment>
<comment type="similarity">
    <text evidence="1">Belongs to the heat shock protein 70 family.</text>
</comment>
<protein>
    <recommendedName>
        <fullName evidence="1">Chaperone protein DnaK</fullName>
    </recommendedName>
    <alternativeName>
        <fullName evidence="1">HSP70</fullName>
    </alternativeName>
    <alternativeName>
        <fullName evidence="1">Heat shock 70 kDa protein</fullName>
    </alternativeName>
    <alternativeName>
        <fullName evidence="1">Heat shock protein 70</fullName>
    </alternativeName>
</protein>
<name>DNAK_FLAPJ</name>
<organism>
    <name type="scientific">Flavobacterium psychrophilum (strain ATCC 49511 / DSM 21280 / CIP 103535 / JIP02/86)</name>
    <dbReference type="NCBI Taxonomy" id="402612"/>
    <lineage>
        <taxon>Bacteria</taxon>
        <taxon>Pseudomonadati</taxon>
        <taxon>Bacteroidota</taxon>
        <taxon>Flavobacteriia</taxon>
        <taxon>Flavobacteriales</taxon>
        <taxon>Flavobacteriaceae</taxon>
        <taxon>Flavobacterium</taxon>
    </lineage>
</organism>
<keyword id="KW-0067">ATP-binding</keyword>
<keyword id="KW-0143">Chaperone</keyword>
<keyword id="KW-0547">Nucleotide-binding</keyword>
<keyword id="KW-0597">Phosphoprotein</keyword>
<keyword id="KW-1185">Reference proteome</keyword>
<keyword id="KW-0346">Stress response</keyword>
<proteinExistence type="inferred from homology"/>
<gene>
    <name evidence="1" type="primary">dnaK</name>
    <name type="ordered locus">FP0864</name>
</gene>
<dbReference type="EMBL" id="AM398681">
    <property type="protein sequence ID" value="CAL42964.1"/>
    <property type="molecule type" value="Genomic_DNA"/>
</dbReference>
<dbReference type="RefSeq" id="WP_011963020.1">
    <property type="nucleotide sequence ID" value="NC_009613.3"/>
</dbReference>
<dbReference type="RefSeq" id="YP_001295780.1">
    <property type="nucleotide sequence ID" value="NC_009613.3"/>
</dbReference>
<dbReference type="SMR" id="A6GXZ1"/>
<dbReference type="STRING" id="402612.FP0864"/>
<dbReference type="EnsemblBacteria" id="CAL42964">
    <property type="protein sequence ID" value="CAL42964"/>
    <property type="gene ID" value="FP0864"/>
</dbReference>
<dbReference type="GeneID" id="66552514"/>
<dbReference type="KEGG" id="fps:FP0864"/>
<dbReference type="PATRIC" id="fig|402612.5.peg.879"/>
<dbReference type="eggNOG" id="COG0443">
    <property type="taxonomic scope" value="Bacteria"/>
</dbReference>
<dbReference type="HOGENOM" id="CLU_005965_2_1_10"/>
<dbReference type="OrthoDB" id="9766019at2"/>
<dbReference type="Proteomes" id="UP000006394">
    <property type="component" value="Chromosome"/>
</dbReference>
<dbReference type="GO" id="GO:0005524">
    <property type="term" value="F:ATP binding"/>
    <property type="evidence" value="ECO:0007669"/>
    <property type="project" value="UniProtKB-UniRule"/>
</dbReference>
<dbReference type="GO" id="GO:0140662">
    <property type="term" value="F:ATP-dependent protein folding chaperone"/>
    <property type="evidence" value="ECO:0007669"/>
    <property type="project" value="InterPro"/>
</dbReference>
<dbReference type="GO" id="GO:0051082">
    <property type="term" value="F:unfolded protein binding"/>
    <property type="evidence" value="ECO:0007669"/>
    <property type="project" value="InterPro"/>
</dbReference>
<dbReference type="CDD" id="cd10234">
    <property type="entry name" value="ASKHA_NBD_HSP70_DnaK-like"/>
    <property type="match status" value="1"/>
</dbReference>
<dbReference type="FunFam" id="2.60.34.10:FF:000014">
    <property type="entry name" value="Chaperone protein DnaK HSP70"/>
    <property type="match status" value="1"/>
</dbReference>
<dbReference type="FunFam" id="3.30.420.40:FF:000020">
    <property type="entry name" value="Chaperone protein HscA homolog"/>
    <property type="match status" value="1"/>
</dbReference>
<dbReference type="FunFam" id="1.20.1270.10:FF:000001">
    <property type="entry name" value="Molecular chaperone DnaK"/>
    <property type="match status" value="1"/>
</dbReference>
<dbReference type="FunFam" id="3.30.420.40:FF:000004">
    <property type="entry name" value="Molecular chaperone DnaK"/>
    <property type="match status" value="1"/>
</dbReference>
<dbReference type="FunFam" id="3.90.640.10:FF:000003">
    <property type="entry name" value="Molecular chaperone DnaK"/>
    <property type="match status" value="1"/>
</dbReference>
<dbReference type="Gene3D" id="1.20.1270.10">
    <property type="match status" value="1"/>
</dbReference>
<dbReference type="Gene3D" id="3.30.420.40">
    <property type="match status" value="2"/>
</dbReference>
<dbReference type="Gene3D" id="3.90.640.10">
    <property type="entry name" value="Actin, Chain A, domain 4"/>
    <property type="match status" value="1"/>
</dbReference>
<dbReference type="Gene3D" id="2.60.34.10">
    <property type="entry name" value="Substrate Binding Domain Of DNAk, Chain A, domain 1"/>
    <property type="match status" value="1"/>
</dbReference>
<dbReference type="HAMAP" id="MF_00332">
    <property type="entry name" value="DnaK"/>
    <property type="match status" value="1"/>
</dbReference>
<dbReference type="InterPro" id="IPR043129">
    <property type="entry name" value="ATPase_NBD"/>
</dbReference>
<dbReference type="InterPro" id="IPR012725">
    <property type="entry name" value="Chaperone_DnaK"/>
</dbReference>
<dbReference type="InterPro" id="IPR018181">
    <property type="entry name" value="Heat_shock_70_CS"/>
</dbReference>
<dbReference type="InterPro" id="IPR029048">
    <property type="entry name" value="HSP70_C_sf"/>
</dbReference>
<dbReference type="InterPro" id="IPR029047">
    <property type="entry name" value="HSP70_peptide-bd_sf"/>
</dbReference>
<dbReference type="InterPro" id="IPR013126">
    <property type="entry name" value="Hsp_70_fam"/>
</dbReference>
<dbReference type="NCBIfam" id="NF001413">
    <property type="entry name" value="PRK00290.1"/>
    <property type="match status" value="1"/>
</dbReference>
<dbReference type="NCBIfam" id="NF003520">
    <property type="entry name" value="PRK05183.1"/>
    <property type="match status" value="1"/>
</dbReference>
<dbReference type="NCBIfam" id="TIGR02350">
    <property type="entry name" value="prok_dnaK"/>
    <property type="match status" value="1"/>
</dbReference>
<dbReference type="PANTHER" id="PTHR19375">
    <property type="entry name" value="HEAT SHOCK PROTEIN 70KDA"/>
    <property type="match status" value="1"/>
</dbReference>
<dbReference type="Pfam" id="PF00012">
    <property type="entry name" value="HSP70"/>
    <property type="match status" value="1"/>
</dbReference>
<dbReference type="PRINTS" id="PR00301">
    <property type="entry name" value="HEATSHOCK70"/>
</dbReference>
<dbReference type="SUPFAM" id="SSF53067">
    <property type="entry name" value="Actin-like ATPase domain"/>
    <property type="match status" value="2"/>
</dbReference>
<dbReference type="SUPFAM" id="SSF100920">
    <property type="entry name" value="Heat shock protein 70kD (HSP70), peptide-binding domain"/>
    <property type="match status" value="1"/>
</dbReference>
<dbReference type="PROSITE" id="PS00297">
    <property type="entry name" value="HSP70_1"/>
    <property type="match status" value="1"/>
</dbReference>
<dbReference type="PROSITE" id="PS00329">
    <property type="entry name" value="HSP70_2"/>
    <property type="match status" value="1"/>
</dbReference>
<dbReference type="PROSITE" id="PS01036">
    <property type="entry name" value="HSP70_3"/>
    <property type="match status" value="1"/>
</dbReference>
<accession>A6GXZ1</accession>
<reference key="1">
    <citation type="journal article" date="2007" name="Nat. Biotechnol.">
        <title>Complete genome sequence of the fish pathogen Flavobacterium psychrophilum.</title>
        <authorList>
            <person name="Duchaud E."/>
            <person name="Boussaha M."/>
            <person name="Loux V."/>
            <person name="Bernardet J.-F."/>
            <person name="Michel C."/>
            <person name="Kerouault B."/>
            <person name="Mondot S."/>
            <person name="Nicolas P."/>
            <person name="Bossy R."/>
            <person name="Caron C."/>
            <person name="Bessieres P."/>
            <person name="Gibrat J.-F."/>
            <person name="Claverol S."/>
            <person name="Dumetz F."/>
            <person name="Le Henaff M."/>
            <person name="Benmansour A."/>
        </authorList>
    </citation>
    <scope>NUCLEOTIDE SEQUENCE [LARGE SCALE GENOMIC DNA]</scope>
    <source>
        <strain>ATCC 49511 / DSM 21280 / CIP 103535 / JIP02/86</strain>
    </source>
</reference>
<feature type="chain" id="PRO_1000059559" description="Chaperone protein DnaK">
    <location>
        <begin position="1"/>
        <end position="626"/>
    </location>
</feature>
<feature type="region of interest" description="Disordered" evidence="2">
    <location>
        <begin position="598"/>
        <end position="626"/>
    </location>
</feature>
<feature type="compositionally biased region" description="Low complexity" evidence="2">
    <location>
        <begin position="598"/>
        <end position="612"/>
    </location>
</feature>
<feature type="compositionally biased region" description="Acidic residues" evidence="2">
    <location>
        <begin position="613"/>
        <end position="626"/>
    </location>
</feature>
<feature type="modified residue" description="Phosphothreonine; by autocatalysis" evidence="1">
    <location>
        <position position="197"/>
    </location>
</feature>
<sequence length="626" mass="67361">MGKIIGIDLGTTNSCVSVMEGQEAVVIPNAEGKRTTPSIIAFVEGGEIKVGDPAKRQAVTNPTKTVASIKRFMGHSFSETTDEAKRVPYSVVKGDNNTPRVDIDGRLYTAQELSAMTLQKMKKTAEDYLGQTVTEAVITVPAYFNDAQRQATKEAGEIAGLKVMRIINEPTAAALAYGLDKKGIDQKIAVYDLGGGTFDISILELGDGVFEVLSTNGDTHLGGDDFDQTIIDWLADEFKAEEGIDLRLDPMSLQRIKEAAEKAKIELSSSAETEINLPYVTATASGPKHLVKKLTRAKFEQLSDTLVKRSMEPVAKALKDAGLTVKDIDEVILVGGSTRMPRIADEVEKFFGKKASKGVNPDEVVAIGAAIQGGVLSGDVKDVLLLDVTPLSLGIETMGGVMTILIESNTTIPTKKSQIFSTAADSQPTVELHVLQGARAMAVDNKTIGRFNLDGIPPAPRGVPQIEVAFDIDANGIIKVSATDKGTGKSHDIRIEASSGLTSEEIERMKKDAEANAGADKIARERVEKINEADSLIFQTETQLKELGDKITDEHKTAIEYALTELRMAHQSQDLEAIQKGLDNVNAAWKTATEAMYAQGEQGQAAQPQAETQGDDVQDVEFEEVK</sequence>